<sequence length="85" mass="9763">MDSKKIARINELAKKKKTEGLTPEEAVEQAKLREEYIAGYRRAVRHHIEGIKIVDEEGNDVTPEKLRQVQREKGLHGRSLDDPES</sequence>
<name>Y508_STRT2</name>
<accession>Q5M5H1</accession>
<organism>
    <name type="scientific">Streptococcus thermophilus (strain ATCC BAA-250 / LMG 18311)</name>
    <dbReference type="NCBI Taxonomy" id="264199"/>
    <lineage>
        <taxon>Bacteria</taxon>
        <taxon>Bacillati</taxon>
        <taxon>Bacillota</taxon>
        <taxon>Bacilli</taxon>
        <taxon>Lactobacillales</taxon>
        <taxon>Streptococcaceae</taxon>
        <taxon>Streptococcus</taxon>
    </lineage>
</organism>
<comment type="subcellular location">
    <subcellularLocation>
        <location evidence="1">Cytoplasm</location>
    </subcellularLocation>
</comment>
<comment type="similarity">
    <text evidence="1">Belongs to the UPF0291 family.</text>
</comment>
<proteinExistence type="inferred from homology"/>
<keyword id="KW-0963">Cytoplasm</keyword>
<keyword id="KW-1185">Reference proteome</keyword>
<protein>
    <recommendedName>
        <fullName evidence="1">UPF0291 protein stu0508</fullName>
    </recommendedName>
</protein>
<feature type="chain" id="PRO_0000095007" description="UPF0291 protein stu0508">
    <location>
        <begin position="1"/>
        <end position="85"/>
    </location>
</feature>
<feature type="region of interest" description="Disordered" evidence="2">
    <location>
        <begin position="62"/>
        <end position="85"/>
    </location>
</feature>
<gene>
    <name type="ordered locus">stu0508</name>
</gene>
<dbReference type="EMBL" id="CP000023">
    <property type="protein sequence ID" value="AAV60216.1"/>
    <property type="molecule type" value="Genomic_DNA"/>
</dbReference>
<dbReference type="RefSeq" id="WP_002949992.1">
    <property type="nucleotide sequence ID" value="NC_006448.1"/>
</dbReference>
<dbReference type="SMR" id="Q5M5H1"/>
<dbReference type="STRING" id="264199.stu0508"/>
<dbReference type="KEGG" id="stl:stu0508"/>
<dbReference type="eggNOG" id="COG4224">
    <property type="taxonomic scope" value="Bacteria"/>
</dbReference>
<dbReference type="HOGENOM" id="CLU_173137_0_2_9"/>
<dbReference type="Proteomes" id="UP000001170">
    <property type="component" value="Chromosome"/>
</dbReference>
<dbReference type="GO" id="GO:0005737">
    <property type="term" value="C:cytoplasm"/>
    <property type="evidence" value="ECO:0007669"/>
    <property type="project" value="UniProtKB-SubCell"/>
</dbReference>
<dbReference type="Gene3D" id="1.10.287.540">
    <property type="entry name" value="Helix hairpin bin"/>
    <property type="match status" value="1"/>
</dbReference>
<dbReference type="HAMAP" id="MF_01103">
    <property type="entry name" value="UPF0291"/>
    <property type="match status" value="1"/>
</dbReference>
<dbReference type="InterPro" id="IPR009242">
    <property type="entry name" value="DUF896"/>
</dbReference>
<dbReference type="NCBIfam" id="NF002711">
    <property type="entry name" value="PRK02539.1"/>
    <property type="match status" value="1"/>
</dbReference>
<dbReference type="PANTHER" id="PTHR37300">
    <property type="entry name" value="UPF0291 PROTEIN CBO2609/CLC_2481"/>
    <property type="match status" value="1"/>
</dbReference>
<dbReference type="PANTHER" id="PTHR37300:SF1">
    <property type="entry name" value="UPF0291 PROTEIN YNZC"/>
    <property type="match status" value="1"/>
</dbReference>
<dbReference type="Pfam" id="PF05979">
    <property type="entry name" value="DUF896"/>
    <property type="match status" value="1"/>
</dbReference>
<dbReference type="SUPFAM" id="SSF158221">
    <property type="entry name" value="YnzC-like"/>
    <property type="match status" value="1"/>
</dbReference>
<reference key="1">
    <citation type="journal article" date="2004" name="Nat. Biotechnol.">
        <title>Complete sequence and comparative genome analysis of the dairy bacterium Streptococcus thermophilus.</title>
        <authorList>
            <person name="Bolotin A."/>
            <person name="Quinquis B."/>
            <person name="Renault P."/>
            <person name="Sorokin A."/>
            <person name="Ehrlich S.D."/>
            <person name="Kulakauskas S."/>
            <person name="Lapidus A."/>
            <person name="Goltsman E."/>
            <person name="Mazur M."/>
            <person name="Pusch G.D."/>
            <person name="Fonstein M."/>
            <person name="Overbeek R."/>
            <person name="Kyprides N."/>
            <person name="Purnelle B."/>
            <person name="Prozzi D."/>
            <person name="Ngui K."/>
            <person name="Masuy D."/>
            <person name="Hancy F."/>
            <person name="Burteau S."/>
            <person name="Boutry M."/>
            <person name="Delcour J."/>
            <person name="Goffeau A."/>
            <person name="Hols P."/>
        </authorList>
    </citation>
    <scope>NUCLEOTIDE SEQUENCE [LARGE SCALE GENOMIC DNA]</scope>
    <source>
        <strain>ATCC BAA-250 / LMG 18311</strain>
    </source>
</reference>
<evidence type="ECO:0000255" key="1">
    <source>
        <dbReference type="HAMAP-Rule" id="MF_01103"/>
    </source>
</evidence>
<evidence type="ECO:0000256" key="2">
    <source>
        <dbReference type="SAM" id="MobiDB-lite"/>
    </source>
</evidence>